<name>RL2_SHESM</name>
<accession>Q0HNT4</accession>
<organism>
    <name type="scientific">Shewanella sp. (strain MR-4)</name>
    <dbReference type="NCBI Taxonomy" id="60480"/>
    <lineage>
        <taxon>Bacteria</taxon>
        <taxon>Pseudomonadati</taxon>
        <taxon>Pseudomonadota</taxon>
        <taxon>Gammaproteobacteria</taxon>
        <taxon>Alteromonadales</taxon>
        <taxon>Shewanellaceae</taxon>
        <taxon>Shewanella</taxon>
    </lineage>
</organism>
<protein>
    <recommendedName>
        <fullName evidence="1">Large ribosomal subunit protein uL2</fullName>
    </recommendedName>
    <alternativeName>
        <fullName evidence="3">50S ribosomal protein L2</fullName>
    </alternativeName>
</protein>
<sequence>MAVIKCKPTSPGRRHVVKVVNSDLHKGKPFAGLLAKKSKSGGRNNTGRITVRHVGGGHKQHYRLIDFKRDKDGIPAKIERLEYDPNRTAHIALVLYADGERRYILAAKGMQAGDKIQSGVEAEIKTGNAMPLRNIPVGSVVHAVEMKPGKGAQIARSAGAYVQVVARDGAYATLRLRSGEMRKVPVDCRATFGEVGNAEHMLRQLGKAGAKRWRGVRPTVRGVAMNPVDHPHGGGEGRTSGGRHPVTPWGVPTKGYKTRSNKRTDKYIVRRRNK</sequence>
<feature type="chain" id="PRO_0000310013" description="Large ribosomal subunit protein uL2">
    <location>
        <begin position="1"/>
        <end position="274"/>
    </location>
</feature>
<feature type="region of interest" description="Disordered" evidence="2">
    <location>
        <begin position="223"/>
        <end position="274"/>
    </location>
</feature>
<keyword id="KW-0687">Ribonucleoprotein</keyword>
<keyword id="KW-0689">Ribosomal protein</keyword>
<keyword id="KW-0694">RNA-binding</keyword>
<keyword id="KW-0699">rRNA-binding</keyword>
<comment type="function">
    <text evidence="1">One of the primary rRNA binding proteins. Required for association of the 30S and 50S subunits to form the 70S ribosome, for tRNA binding and peptide bond formation. It has been suggested to have peptidyltransferase activity; this is somewhat controversial. Makes several contacts with the 16S rRNA in the 70S ribosome.</text>
</comment>
<comment type="subunit">
    <text evidence="1">Part of the 50S ribosomal subunit. Forms a bridge to the 30S subunit in the 70S ribosome.</text>
</comment>
<comment type="similarity">
    <text evidence="1">Belongs to the universal ribosomal protein uL2 family.</text>
</comment>
<dbReference type="EMBL" id="CP000446">
    <property type="protein sequence ID" value="ABI37283.1"/>
    <property type="molecule type" value="Genomic_DNA"/>
</dbReference>
<dbReference type="RefSeq" id="WP_011621028.1">
    <property type="nucleotide sequence ID" value="NC_008321.1"/>
</dbReference>
<dbReference type="SMR" id="Q0HNT4"/>
<dbReference type="GeneID" id="94726189"/>
<dbReference type="KEGG" id="she:Shewmr4_0202"/>
<dbReference type="HOGENOM" id="CLU_036235_2_1_6"/>
<dbReference type="GO" id="GO:0015934">
    <property type="term" value="C:large ribosomal subunit"/>
    <property type="evidence" value="ECO:0007669"/>
    <property type="project" value="InterPro"/>
</dbReference>
<dbReference type="GO" id="GO:0019843">
    <property type="term" value="F:rRNA binding"/>
    <property type="evidence" value="ECO:0007669"/>
    <property type="project" value="UniProtKB-UniRule"/>
</dbReference>
<dbReference type="GO" id="GO:0003735">
    <property type="term" value="F:structural constituent of ribosome"/>
    <property type="evidence" value="ECO:0007669"/>
    <property type="project" value="InterPro"/>
</dbReference>
<dbReference type="GO" id="GO:0016740">
    <property type="term" value="F:transferase activity"/>
    <property type="evidence" value="ECO:0007669"/>
    <property type="project" value="InterPro"/>
</dbReference>
<dbReference type="GO" id="GO:0002181">
    <property type="term" value="P:cytoplasmic translation"/>
    <property type="evidence" value="ECO:0007669"/>
    <property type="project" value="TreeGrafter"/>
</dbReference>
<dbReference type="FunFam" id="2.30.30.30:FF:000001">
    <property type="entry name" value="50S ribosomal protein L2"/>
    <property type="match status" value="1"/>
</dbReference>
<dbReference type="FunFam" id="2.40.50.140:FF:000003">
    <property type="entry name" value="50S ribosomal protein L2"/>
    <property type="match status" value="1"/>
</dbReference>
<dbReference type="FunFam" id="4.10.950.10:FF:000001">
    <property type="entry name" value="50S ribosomal protein L2"/>
    <property type="match status" value="1"/>
</dbReference>
<dbReference type="Gene3D" id="2.30.30.30">
    <property type="match status" value="1"/>
</dbReference>
<dbReference type="Gene3D" id="2.40.50.140">
    <property type="entry name" value="Nucleic acid-binding proteins"/>
    <property type="match status" value="1"/>
</dbReference>
<dbReference type="Gene3D" id="4.10.950.10">
    <property type="entry name" value="Ribosomal protein L2, domain 3"/>
    <property type="match status" value="1"/>
</dbReference>
<dbReference type="HAMAP" id="MF_01320_B">
    <property type="entry name" value="Ribosomal_uL2_B"/>
    <property type="match status" value="1"/>
</dbReference>
<dbReference type="InterPro" id="IPR012340">
    <property type="entry name" value="NA-bd_OB-fold"/>
</dbReference>
<dbReference type="InterPro" id="IPR014722">
    <property type="entry name" value="Rib_uL2_dom2"/>
</dbReference>
<dbReference type="InterPro" id="IPR002171">
    <property type="entry name" value="Ribosomal_uL2"/>
</dbReference>
<dbReference type="InterPro" id="IPR005880">
    <property type="entry name" value="Ribosomal_uL2_bac/org-type"/>
</dbReference>
<dbReference type="InterPro" id="IPR022669">
    <property type="entry name" value="Ribosomal_uL2_C"/>
</dbReference>
<dbReference type="InterPro" id="IPR022671">
    <property type="entry name" value="Ribosomal_uL2_CS"/>
</dbReference>
<dbReference type="InterPro" id="IPR014726">
    <property type="entry name" value="Ribosomal_uL2_dom3"/>
</dbReference>
<dbReference type="InterPro" id="IPR022666">
    <property type="entry name" value="Ribosomal_uL2_RNA-bd_dom"/>
</dbReference>
<dbReference type="InterPro" id="IPR008991">
    <property type="entry name" value="Translation_prot_SH3-like_sf"/>
</dbReference>
<dbReference type="NCBIfam" id="TIGR01171">
    <property type="entry name" value="rplB_bact"/>
    <property type="match status" value="1"/>
</dbReference>
<dbReference type="PANTHER" id="PTHR13691:SF5">
    <property type="entry name" value="LARGE RIBOSOMAL SUBUNIT PROTEIN UL2M"/>
    <property type="match status" value="1"/>
</dbReference>
<dbReference type="PANTHER" id="PTHR13691">
    <property type="entry name" value="RIBOSOMAL PROTEIN L2"/>
    <property type="match status" value="1"/>
</dbReference>
<dbReference type="Pfam" id="PF00181">
    <property type="entry name" value="Ribosomal_L2"/>
    <property type="match status" value="1"/>
</dbReference>
<dbReference type="Pfam" id="PF03947">
    <property type="entry name" value="Ribosomal_L2_C"/>
    <property type="match status" value="1"/>
</dbReference>
<dbReference type="PIRSF" id="PIRSF002158">
    <property type="entry name" value="Ribosomal_L2"/>
    <property type="match status" value="1"/>
</dbReference>
<dbReference type="SMART" id="SM01383">
    <property type="entry name" value="Ribosomal_L2"/>
    <property type="match status" value="1"/>
</dbReference>
<dbReference type="SMART" id="SM01382">
    <property type="entry name" value="Ribosomal_L2_C"/>
    <property type="match status" value="1"/>
</dbReference>
<dbReference type="SUPFAM" id="SSF50249">
    <property type="entry name" value="Nucleic acid-binding proteins"/>
    <property type="match status" value="1"/>
</dbReference>
<dbReference type="SUPFAM" id="SSF50104">
    <property type="entry name" value="Translation proteins SH3-like domain"/>
    <property type="match status" value="1"/>
</dbReference>
<dbReference type="PROSITE" id="PS00467">
    <property type="entry name" value="RIBOSOMAL_L2"/>
    <property type="match status" value="1"/>
</dbReference>
<reference key="1">
    <citation type="submission" date="2006-08" db="EMBL/GenBank/DDBJ databases">
        <title>Complete sequence of Shewanella sp. MR-4.</title>
        <authorList>
            <consortium name="US DOE Joint Genome Institute"/>
            <person name="Copeland A."/>
            <person name="Lucas S."/>
            <person name="Lapidus A."/>
            <person name="Barry K."/>
            <person name="Detter J.C."/>
            <person name="Glavina del Rio T."/>
            <person name="Hammon N."/>
            <person name="Israni S."/>
            <person name="Dalin E."/>
            <person name="Tice H."/>
            <person name="Pitluck S."/>
            <person name="Kiss H."/>
            <person name="Brettin T."/>
            <person name="Bruce D."/>
            <person name="Han C."/>
            <person name="Tapia R."/>
            <person name="Gilna P."/>
            <person name="Schmutz J."/>
            <person name="Larimer F."/>
            <person name="Land M."/>
            <person name="Hauser L."/>
            <person name="Kyrpides N."/>
            <person name="Mikhailova N."/>
            <person name="Nealson K."/>
            <person name="Konstantinidis K."/>
            <person name="Klappenbach J."/>
            <person name="Tiedje J."/>
            <person name="Richardson P."/>
        </authorList>
    </citation>
    <scope>NUCLEOTIDE SEQUENCE [LARGE SCALE GENOMIC DNA]</scope>
    <source>
        <strain>MR-4</strain>
    </source>
</reference>
<gene>
    <name evidence="1" type="primary">rplB</name>
    <name type="ordered locus">Shewmr4_0202</name>
</gene>
<evidence type="ECO:0000255" key="1">
    <source>
        <dbReference type="HAMAP-Rule" id="MF_01320"/>
    </source>
</evidence>
<evidence type="ECO:0000256" key="2">
    <source>
        <dbReference type="SAM" id="MobiDB-lite"/>
    </source>
</evidence>
<evidence type="ECO:0000305" key="3"/>
<proteinExistence type="inferred from homology"/>